<keyword id="KW-0687">Ribonucleoprotein</keyword>
<keyword id="KW-0689">Ribosomal protein</keyword>
<keyword id="KW-0694">RNA-binding</keyword>
<keyword id="KW-0699">rRNA-binding</keyword>
<feature type="chain" id="PRO_0000130934" description="Small ribosomal subunit protein uS14A">
    <location>
        <begin position="1"/>
        <end position="89"/>
    </location>
</feature>
<gene>
    <name evidence="1" type="primary">rpsN</name>
    <name type="synonym">rpsN2</name>
    <name type="ordered locus">SA1171</name>
</gene>
<sequence>MAKKSKIAKERKREELVNKYYELRKELKAKGDYEALRKLPRDSSPTRLTRRCKVTGRPRGVLRKFEMSRIAFREHAHKGQIPGVKKSSW</sequence>
<name>RS14_STAAN</name>
<protein>
    <recommendedName>
        <fullName evidence="1">Small ribosomal subunit protein uS14A</fullName>
    </recommendedName>
    <alternativeName>
        <fullName evidence="2">30S ribosomal protein S14</fullName>
    </alternativeName>
</protein>
<evidence type="ECO:0000255" key="1">
    <source>
        <dbReference type="HAMAP-Rule" id="MF_00537"/>
    </source>
</evidence>
<evidence type="ECO:0000305" key="2"/>
<organism>
    <name type="scientific">Staphylococcus aureus (strain N315)</name>
    <dbReference type="NCBI Taxonomy" id="158879"/>
    <lineage>
        <taxon>Bacteria</taxon>
        <taxon>Bacillati</taxon>
        <taxon>Bacillota</taxon>
        <taxon>Bacilli</taxon>
        <taxon>Bacillales</taxon>
        <taxon>Staphylococcaceae</taxon>
        <taxon>Staphylococcus</taxon>
    </lineage>
</organism>
<dbReference type="EMBL" id="BA000018">
    <property type="protein sequence ID" value="BAB42429.1"/>
    <property type="molecule type" value="Genomic_DNA"/>
</dbReference>
<dbReference type="PIR" id="A89909">
    <property type="entry name" value="A89909"/>
</dbReference>
<dbReference type="RefSeq" id="WP_001085655.1">
    <property type="nucleotide sequence ID" value="NC_002745.2"/>
</dbReference>
<dbReference type="SMR" id="P66415"/>
<dbReference type="EnsemblBacteria" id="BAB42429">
    <property type="protein sequence ID" value="BAB42429"/>
    <property type="gene ID" value="BAB42429"/>
</dbReference>
<dbReference type="GeneID" id="98345705"/>
<dbReference type="KEGG" id="sau:SA1171"/>
<dbReference type="HOGENOM" id="CLU_139869_0_0_9"/>
<dbReference type="GO" id="GO:0005737">
    <property type="term" value="C:cytoplasm"/>
    <property type="evidence" value="ECO:0007669"/>
    <property type="project" value="UniProtKB-ARBA"/>
</dbReference>
<dbReference type="GO" id="GO:0015935">
    <property type="term" value="C:small ribosomal subunit"/>
    <property type="evidence" value="ECO:0007669"/>
    <property type="project" value="TreeGrafter"/>
</dbReference>
<dbReference type="GO" id="GO:0019843">
    <property type="term" value="F:rRNA binding"/>
    <property type="evidence" value="ECO:0007669"/>
    <property type="project" value="UniProtKB-UniRule"/>
</dbReference>
<dbReference type="GO" id="GO:0003735">
    <property type="term" value="F:structural constituent of ribosome"/>
    <property type="evidence" value="ECO:0007669"/>
    <property type="project" value="InterPro"/>
</dbReference>
<dbReference type="GO" id="GO:0006412">
    <property type="term" value="P:translation"/>
    <property type="evidence" value="ECO:0007669"/>
    <property type="project" value="UniProtKB-UniRule"/>
</dbReference>
<dbReference type="FunFam" id="4.10.830.10:FF:000003">
    <property type="entry name" value="30S ribosomal protein S14"/>
    <property type="match status" value="1"/>
</dbReference>
<dbReference type="Gene3D" id="4.10.830.10">
    <property type="entry name" value="30s Ribosomal Protein S14, Chain N"/>
    <property type="match status" value="1"/>
</dbReference>
<dbReference type="HAMAP" id="MF_00537">
    <property type="entry name" value="Ribosomal_uS14_1"/>
    <property type="match status" value="1"/>
</dbReference>
<dbReference type="InterPro" id="IPR001209">
    <property type="entry name" value="Ribosomal_uS14"/>
</dbReference>
<dbReference type="InterPro" id="IPR023036">
    <property type="entry name" value="Ribosomal_uS14_bac/plastid"/>
</dbReference>
<dbReference type="InterPro" id="IPR018271">
    <property type="entry name" value="Ribosomal_uS14_CS"/>
</dbReference>
<dbReference type="InterPro" id="IPR043140">
    <property type="entry name" value="Ribosomal_uS14_sf"/>
</dbReference>
<dbReference type="NCBIfam" id="NF006477">
    <property type="entry name" value="PRK08881.1"/>
    <property type="match status" value="1"/>
</dbReference>
<dbReference type="PANTHER" id="PTHR19836">
    <property type="entry name" value="30S RIBOSOMAL PROTEIN S14"/>
    <property type="match status" value="1"/>
</dbReference>
<dbReference type="PANTHER" id="PTHR19836:SF19">
    <property type="entry name" value="SMALL RIBOSOMAL SUBUNIT PROTEIN US14M"/>
    <property type="match status" value="1"/>
</dbReference>
<dbReference type="Pfam" id="PF00253">
    <property type="entry name" value="Ribosomal_S14"/>
    <property type="match status" value="1"/>
</dbReference>
<dbReference type="SUPFAM" id="SSF57716">
    <property type="entry name" value="Glucocorticoid receptor-like (DNA-binding domain)"/>
    <property type="match status" value="1"/>
</dbReference>
<dbReference type="PROSITE" id="PS00527">
    <property type="entry name" value="RIBOSOMAL_S14"/>
    <property type="match status" value="1"/>
</dbReference>
<comment type="function">
    <text evidence="1">Binds 16S rRNA, required for the assembly of 30S particles and may also be responsible for determining the conformation of the 16S rRNA at the A site.</text>
</comment>
<comment type="subunit">
    <text evidence="1">Part of the 30S ribosomal subunit. Contacts proteins S3 and S10.</text>
</comment>
<comment type="similarity">
    <text evidence="1">Belongs to the universal ribosomal protein uS14 family.</text>
</comment>
<accession>P66415</accession>
<accession>Q99UE0</accession>
<reference key="1">
    <citation type="journal article" date="2001" name="Lancet">
        <title>Whole genome sequencing of meticillin-resistant Staphylococcus aureus.</title>
        <authorList>
            <person name="Kuroda M."/>
            <person name="Ohta T."/>
            <person name="Uchiyama I."/>
            <person name="Baba T."/>
            <person name="Yuzawa H."/>
            <person name="Kobayashi I."/>
            <person name="Cui L."/>
            <person name="Oguchi A."/>
            <person name="Aoki K."/>
            <person name="Nagai Y."/>
            <person name="Lian J.-Q."/>
            <person name="Ito T."/>
            <person name="Kanamori M."/>
            <person name="Matsumaru H."/>
            <person name="Maruyama A."/>
            <person name="Murakami H."/>
            <person name="Hosoyama A."/>
            <person name="Mizutani-Ui Y."/>
            <person name="Takahashi N.K."/>
            <person name="Sawano T."/>
            <person name="Inoue R."/>
            <person name="Kaito C."/>
            <person name="Sekimizu K."/>
            <person name="Hirakawa H."/>
            <person name="Kuhara S."/>
            <person name="Goto S."/>
            <person name="Yabuzaki J."/>
            <person name="Kanehisa M."/>
            <person name="Yamashita A."/>
            <person name="Oshima K."/>
            <person name="Furuya K."/>
            <person name="Yoshino C."/>
            <person name="Shiba T."/>
            <person name="Hattori M."/>
            <person name="Ogasawara N."/>
            <person name="Hayashi H."/>
            <person name="Hiramatsu K."/>
        </authorList>
    </citation>
    <scope>NUCLEOTIDE SEQUENCE [LARGE SCALE GENOMIC DNA]</scope>
    <source>
        <strain>N315</strain>
    </source>
</reference>
<proteinExistence type="inferred from homology"/>